<organism>
    <name type="scientific">Shewanella pealeana (strain ATCC 700345 / ANG-SQ1)</name>
    <dbReference type="NCBI Taxonomy" id="398579"/>
    <lineage>
        <taxon>Bacteria</taxon>
        <taxon>Pseudomonadati</taxon>
        <taxon>Pseudomonadota</taxon>
        <taxon>Gammaproteobacteria</taxon>
        <taxon>Alteromonadales</taxon>
        <taxon>Shewanellaceae</taxon>
        <taxon>Shewanella</taxon>
    </lineage>
</organism>
<accession>A8H0U2</accession>
<evidence type="ECO:0000255" key="1">
    <source>
        <dbReference type="HAMAP-Rule" id="MF_01363"/>
    </source>
</evidence>
<evidence type="ECO:0000305" key="2"/>
<name>RL21_SHEPA</name>
<keyword id="KW-1185">Reference proteome</keyword>
<keyword id="KW-0687">Ribonucleoprotein</keyword>
<keyword id="KW-0689">Ribosomal protein</keyword>
<keyword id="KW-0694">RNA-binding</keyword>
<keyword id="KW-0699">rRNA-binding</keyword>
<gene>
    <name evidence="1" type="primary">rplU</name>
    <name type="ordered locus">Spea_0852</name>
</gene>
<sequence>MYAVFQSGGKQHRVEAGHTVRLEKLEVATGETIEFDQVLLVADGETVHVGAPLVEGGKVVAEVISHGRADKVTIVKFRRRKHHDKKMGHRQWFTEVKITAINA</sequence>
<feature type="chain" id="PRO_1000087000" description="Large ribosomal subunit protein bL21">
    <location>
        <begin position="1"/>
        <end position="103"/>
    </location>
</feature>
<comment type="function">
    <text evidence="1">This protein binds to 23S rRNA in the presence of protein L20.</text>
</comment>
<comment type="subunit">
    <text evidence="1">Part of the 50S ribosomal subunit. Contacts protein L20.</text>
</comment>
<comment type="similarity">
    <text evidence="1">Belongs to the bacterial ribosomal protein bL21 family.</text>
</comment>
<protein>
    <recommendedName>
        <fullName evidence="1">Large ribosomal subunit protein bL21</fullName>
    </recommendedName>
    <alternativeName>
        <fullName evidence="2">50S ribosomal protein L21</fullName>
    </alternativeName>
</protein>
<proteinExistence type="inferred from homology"/>
<dbReference type="EMBL" id="CP000851">
    <property type="protein sequence ID" value="ABV86179.1"/>
    <property type="molecule type" value="Genomic_DNA"/>
</dbReference>
<dbReference type="RefSeq" id="WP_012154113.1">
    <property type="nucleotide sequence ID" value="NC_009901.1"/>
</dbReference>
<dbReference type="SMR" id="A8H0U2"/>
<dbReference type="STRING" id="398579.Spea_0852"/>
<dbReference type="KEGG" id="spl:Spea_0852"/>
<dbReference type="eggNOG" id="COG0261">
    <property type="taxonomic scope" value="Bacteria"/>
</dbReference>
<dbReference type="HOGENOM" id="CLU_061463_3_3_6"/>
<dbReference type="OrthoDB" id="9813334at2"/>
<dbReference type="Proteomes" id="UP000002608">
    <property type="component" value="Chromosome"/>
</dbReference>
<dbReference type="GO" id="GO:0005737">
    <property type="term" value="C:cytoplasm"/>
    <property type="evidence" value="ECO:0007669"/>
    <property type="project" value="UniProtKB-ARBA"/>
</dbReference>
<dbReference type="GO" id="GO:1990904">
    <property type="term" value="C:ribonucleoprotein complex"/>
    <property type="evidence" value="ECO:0007669"/>
    <property type="project" value="UniProtKB-KW"/>
</dbReference>
<dbReference type="GO" id="GO:0005840">
    <property type="term" value="C:ribosome"/>
    <property type="evidence" value="ECO:0007669"/>
    <property type="project" value="UniProtKB-KW"/>
</dbReference>
<dbReference type="GO" id="GO:0019843">
    <property type="term" value="F:rRNA binding"/>
    <property type="evidence" value="ECO:0007669"/>
    <property type="project" value="UniProtKB-UniRule"/>
</dbReference>
<dbReference type="GO" id="GO:0003735">
    <property type="term" value="F:structural constituent of ribosome"/>
    <property type="evidence" value="ECO:0007669"/>
    <property type="project" value="InterPro"/>
</dbReference>
<dbReference type="GO" id="GO:0006412">
    <property type="term" value="P:translation"/>
    <property type="evidence" value="ECO:0007669"/>
    <property type="project" value="UniProtKB-UniRule"/>
</dbReference>
<dbReference type="HAMAP" id="MF_01363">
    <property type="entry name" value="Ribosomal_bL21"/>
    <property type="match status" value="1"/>
</dbReference>
<dbReference type="InterPro" id="IPR028909">
    <property type="entry name" value="bL21-like"/>
</dbReference>
<dbReference type="InterPro" id="IPR036164">
    <property type="entry name" value="bL21-like_sf"/>
</dbReference>
<dbReference type="InterPro" id="IPR001787">
    <property type="entry name" value="Ribosomal_bL21"/>
</dbReference>
<dbReference type="InterPro" id="IPR018258">
    <property type="entry name" value="Ribosomal_bL21_CS"/>
</dbReference>
<dbReference type="NCBIfam" id="TIGR00061">
    <property type="entry name" value="L21"/>
    <property type="match status" value="1"/>
</dbReference>
<dbReference type="PANTHER" id="PTHR21349">
    <property type="entry name" value="50S RIBOSOMAL PROTEIN L21"/>
    <property type="match status" value="1"/>
</dbReference>
<dbReference type="PANTHER" id="PTHR21349:SF0">
    <property type="entry name" value="LARGE RIBOSOMAL SUBUNIT PROTEIN BL21M"/>
    <property type="match status" value="1"/>
</dbReference>
<dbReference type="Pfam" id="PF00829">
    <property type="entry name" value="Ribosomal_L21p"/>
    <property type="match status" value="1"/>
</dbReference>
<dbReference type="SUPFAM" id="SSF141091">
    <property type="entry name" value="L21p-like"/>
    <property type="match status" value="1"/>
</dbReference>
<dbReference type="PROSITE" id="PS01169">
    <property type="entry name" value="RIBOSOMAL_L21"/>
    <property type="match status" value="1"/>
</dbReference>
<reference key="1">
    <citation type="submission" date="2007-10" db="EMBL/GenBank/DDBJ databases">
        <title>Complete sequence of Shewanella pealeana ATCC 700345.</title>
        <authorList>
            <consortium name="US DOE Joint Genome Institute"/>
            <person name="Copeland A."/>
            <person name="Lucas S."/>
            <person name="Lapidus A."/>
            <person name="Barry K."/>
            <person name="Glavina del Rio T."/>
            <person name="Dalin E."/>
            <person name="Tice H."/>
            <person name="Pitluck S."/>
            <person name="Chertkov O."/>
            <person name="Brettin T."/>
            <person name="Bruce D."/>
            <person name="Detter J.C."/>
            <person name="Han C."/>
            <person name="Schmutz J."/>
            <person name="Larimer F."/>
            <person name="Land M."/>
            <person name="Hauser L."/>
            <person name="Kyrpides N."/>
            <person name="Kim E."/>
            <person name="Zhao J.-S.Z."/>
            <person name="Manno D."/>
            <person name="Hawari J."/>
            <person name="Richardson P."/>
        </authorList>
    </citation>
    <scope>NUCLEOTIDE SEQUENCE [LARGE SCALE GENOMIC DNA]</scope>
    <source>
        <strain>ATCC 700345 / ANG-SQ1</strain>
    </source>
</reference>